<sequence>MSTVLPESNATSRIPANDPALEKVDSEHGVEYAREKFGTALRGDRAGLKFESKFCPDDGRTPFATTAWDLRSAAIKDESGNALFEQTDCEVPASWSQLATNVVVSKYFYGDPKNTDERERSVRQLIHRVTRTISDWGLADGYFDTPEDGERFYRDLTWLSLHQHGAFNSPVWFNVGLHAQYDVEGDMCNWHWDRTENTTAQPDNPYEYPQGSACFIQSVDDNMEDIMRLACSEAMLFKFGSGTGTDLSTIRSQREKLSGGGTPSGPLSFMRVYDSIAGVVKSGGKTRRAAKMQSLKVWHPDILEFIECKWAEEKKAHALIREGYDSNFNGEAYASVCFQNANLSVRLTDDYMEAVRKNENFQTRWITDKPTTEPPSYVAKELLNKMAECAWHCGDPGVQYDTTINKWHTCPNSGAINASNPCSEYMFLDDTACNLASINLMKFVQQDGSFDHERFRAACRTFFIAQEILVDHASYPTEPIARNSHKFRPLGLGYSNLGSVIMTAGLPYDSDAARGMCGSLTALLHGEANRTSAELASVVGTFDGYVENEAPMLRVMQMHRDACDQINDDGPAELKEAARELWDGVLEIGEKYGFRNAQATVLAPTGTISFMMDCDTTGIEPDIALVKYKQLAGGGMLKIVNQTVKLGLKTLGYDADTIDEILKYVDANDTIEGAPGLQDEHLAVFDCAFKPANGVRSIGWRAHITMMAAAQPFLSGAISKTVNMPTDVTPQDIADAYFWGWELGLKAIAIYRDGSKQSQPLNTKSDEQKATDAAEAAKVETVEKIVYKPRRERLPDTRQSLTHKFSIAGHEGYLCVGLYPDGRPGEMFITMAKEGSTIGGIMDSFGTALSIAMQYGVPLEVIVNKFSHTRFEPMGHTSNKDIRIAKSVVDYIARWLGITFMSGNDYSPSAEGAAKTGGNGPDLTTAPAGATANNNSPVMAELRADAGAAVALVERATLLASLQNGVSNGSATNGHSNGQSAGGSSDGAVAERAVDGLGGQADQFSRFQTDAPSCDNCGSITVRNGNCYLCHNCGNSMGCS</sequence>
<comment type="function">
    <text evidence="1">Catalyzes the reduction of ribonucleotides to deoxyribonucleotides. May function to provide a pool of deoxyribonucleotide precursors for DNA repair during oxygen limitation and/or for immediate growth after restoration of oxygen (By similarity).</text>
</comment>
<comment type="catalytic activity">
    <reaction>
        <text>a 2'-deoxyribonucleoside 5'-diphosphate + [thioredoxin]-disulfide + H2O = a ribonucleoside 5'-diphosphate + [thioredoxin]-dithiol</text>
        <dbReference type="Rhea" id="RHEA:23252"/>
        <dbReference type="Rhea" id="RHEA-COMP:10698"/>
        <dbReference type="Rhea" id="RHEA-COMP:10700"/>
        <dbReference type="ChEBI" id="CHEBI:15377"/>
        <dbReference type="ChEBI" id="CHEBI:29950"/>
        <dbReference type="ChEBI" id="CHEBI:50058"/>
        <dbReference type="ChEBI" id="CHEBI:57930"/>
        <dbReference type="ChEBI" id="CHEBI:73316"/>
        <dbReference type="EC" id="1.17.4.1"/>
    </reaction>
</comment>
<comment type="cofactor">
    <cofactor evidence="1">
        <name>adenosylcob(III)alamin</name>
        <dbReference type="ChEBI" id="CHEBI:18408"/>
    </cofactor>
    <text evidence="1">5'-deoxyadenosylcobalamine (coenzyme B12).</text>
</comment>
<comment type="similarity">
    <text evidence="3">Belongs to the ribonucleoside diphosphate reductase class-2 family.</text>
</comment>
<feature type="chain" id="PRO_0000231655" description="Vitamin B12-dependent ribonucleotide reductase">
    <location>
        <begin position="1"/>
        <end position="1040"/>
    </location>
</feature>
<feature type="region of interest" description="Disordered" evidence="2">
    <location>
        <begin position="909"/>
        <end position="932"/>
    </location>
</feature>
<feature type="region of interest" description="Disordered" evidence="2">
    <location>
        <begin position="969"/>
        <end position="988"/>
    </location>
</feature>
<feature type="compositionally biased region" description="Polar residues" evidence="2">
    <location>
        <begin position="969"/>
        <end position="979"/>
    </location>
</feature>
<feature type="active site" description="Proton acceptor" evidence="1">
    <location>
        <position position="420"/>
    </location>
</feature>
<feature type="active site" description="Cysteine radical intermediate" evidence="1">
    <location>
        <position position="422"/>
    </location>
</feature>
<feature type="active site" description="Proton acceptor" evidence="1">
    <location>
        <position position="424"/>
    </location>
</feature>
<feature type="binding site" evidence="1">
    <location>
        <position position="169"/>
    </location>
    <ligand>
        <name>substrate</name>
    </ligand>
</feature>
<feature type="binding site" evidence="1">
    <location>
        <begin position="213"/>
        <end position="214"/>
    </location>
    <ligand>
        <name>substrate</name>
    </ligand>
</feature>
<feature type="binding site" evidence="1">
    <location>
        <position position="242"/>
    </location>
    <ligand>
        <name>substrate</name>
    </ligand>
</feature>
<feature type="binding site" evidence="1">
    <location>
        <begin position="420"/>
        <end position="424"/>
    </location>
    <ligand>
        <name>substrate</name>
    </ligand>
</feature>
<feature type="binding site" evidence="1">
    <location>
        <begin position="604"/>
        <end position="608"/>
    </location>
    <ligand>
        <name>substrate</name>
    </ligand>
</feature>
<feature type="disulfide bond" description="Redox-active" evidence="1">
    <location>
        <begin position="214"/>
        <end position="433"/>
    </location>
</feature>
<protein>
    <recommendedName>
        <fullName>Vitamin B12-dependent ribonucleotide reductase</fullName>
        <ecNumber>1.17.4.1</ecNumber>
    </recommendedName>
    <alternativeName>
        <fullName>Ribonucleoside-diphosphate reductase NrdJ</fullName>
    </alternativeName>
</protein>
<name>NRDJ_RHOBA</name>
<accession>Q7UI46</accession>
<organism>
    <name type="scientific">Rhodopirellula baltica (strain DSM 10527 / NCIMB 13988 / SH1)</name>
    <dbReference type="NCBI Taxonomy" id="243090"/>
    <lineage>
        <taxon>Bacteria</taxon>
        <taxon>Pseudomonadati</taxon>
        <taxon>Planctomycetota</taxon>
        <taxon>Planctomycetia</taxon>
        <taxon>Pirellulales</taxon>
        <taxon>Pirellulaceae</taxon>
        <taxon>Rhodopirellula</taxon>
    </lineage>
</organism>
<gene>
    <name type="primary">nrdJ</name>
    <name type="ordered locus">RB12762</name>
</gene>
<dbReference type="EC" id="1.17.4.1"/>
<dbReference type="EMBL" id="BX294155">
    <property type="protein sequence ID" value="CAD77768.1"/>
    <property type="molecule type" value="Genomic_DNA"/>
</dbReference>
<dbReference type="RefSeq" id="NP_870691.1">
    <property type="nucleotide sequence ID" value="NC_005027.1"/>
</dbReference>
<dbReference type="RefSeq" id="WP_011123898.1">
    <property type="nucleotide sequence ID" value="NC_005027.1"/>
</dbReference>
<dbReference type="SMR" id="Q7UI46"/>
<dbReference type="FunCoup" id="Q7UI46">
    <property type="interactions" value="99"/>
</dbReference>
<dbReference type="STRING" id="243090.RB12762"/>
<dbReference type="EnsemblBacteria" id="CAD77768">
    <property type="protein sequence ID" value="CAD77768"/>
    <property type="gene ID" value="RB12762"/>
</dbReference>
<dbReference type="KEGG" id="rba:RB12762"/>
<dbReference type="PATRIC" id="fig|243090.15.peg.6184"/>
<dbReference type="eggNOG" id="COG0209">
    <property type="taxonomic scope" value="Bacteria"/>
</dbReference>
<dbReference type="HOGENOM" id="CLU_000404_0_1_0"/>
<dbReference type="InParanoid" id="Q7UI46"/>
<dbReference type="OrthoDB" id="9762933at2"/>
<dbReference type="Proteomes" id="UP000001025">
    <property type="component" value="Chromosome"/>
</dbReference>
<dbReference type="GO" id="GO:0031419">
    <property type="term" value="F:cobalamin binding"/>
    <property type="evidence" value="ECO:0007669"/>
    <property type="project" value="UniProtKB-KW"/>
</dbReference>
<dbReference type="GO" id="GO:0050897">
    <property type="term" value="F:cobalt ion binding"/>
    <property type="evidence" value="ECO:0007669"/>
    <property type="project" value="InterPro"/>
</dbReference>
<dbReference type="GO" id="GO:0000166">
    <property type="term" value="F:nucleotide binding"/>
    <property type="evidence" value="ECO:0007669"/>
    <property type="project" value="UniProtKB-KW"/>
</dbReference>
<dbReference type="GO" id="GO:0004748">
    <property type="term" value="F:ribonucleoside-diphosphate reductase activity, thioredoxin disulfide as acceptor"/>
    <property type="evidence" value="ECO:0000318"/>
    <property type="project" value="GO_Central"/>
</dbReference>
<dbReference type="GO" id="GO:0071897">
    <property type="term" value="P:DNA biosynthetic process"/>
    <property type="evidence" value="ECO:0007669"/>
    <property type="project" value="UniProtKB-KW"/>
</dbReference>
<dbReference type="CDD" id="cd02888">
    <property type="entry name" value="RNR_II_dimer"/>
    <property type="match status" value="1"/>
</dbReference>
<dbReference type="FunFam" id="3.20.70.20:FF:000007">
    <property type="entry name" value="Vitamin B12-dependent ribonucleotide reductase"/>
    <property type="match status" value="1"/>
</dbReference>
<dbReference type="Gene3D" id="3.20.70.20">
    <property type="match status" value="1"/>
</dbReference>
<dbReference type="InterPro" id="IPR050862">
    <property type="entry name" value="RdRp_reductase_class-2"/>
</dbReference>
<dbReference type="InterPro" id="IPR013678">
    <property type="entry name" value="RNR_2_N"/>
</dbReference>
<dbReference type="InterPro" id="IPR000788">
    <property type="entry name" value="RNR_lg_C"/>
</dbReference>
<dbReference type="InterPro" id="IPR013344">
    <property type="entry name" value="RNR_NrdJ/NrdZ"/>
</dbReference>
<dbReference type="InterPro" id="IPR024434">
    <property type="entry name" value="TSCPD_dom"/>
</dbReference>
<dbReference type="NCBIfam" id="TIGR02504">
    <property type="entry name" value="NrdJ_Z"/>
    <property type="match status" value="1"/>
</dbReference>
<dbReference type="NCBIfam" id="NF005122">
    <property type="entry name" value="PRK06556.1"/>
    <property type="match status" value="1"/>
</dbReference>
<dbReference type="PANTHER" id="PTHR43371:SF1">
    <property type="entry name" value="RIBONUCLEOSIDE-DIPHOSPHATE REDUCTASE"/>
    <property type="match status" value="1"/>
</dbReference>
<dbReference type="PANTHER" id="PTHR43371">
    <property type="entry name" value="VITAMIN B12-DEPENDENT RIBONUCLEOTIDE REDUCTASE"/>
    <property type="match status" value="1"/>
</dbReference>
<dbReference type="Pfam" id="PF08471">
    <property type="entry name" value="Ribonuc_red_2_N"/>
    <property type="match status" value="1"/>
</dbReference>
<dbReference type="Pfam" id="PF02867">
    <property type="entry name" value="Ribonuc_red_lgC"/>
    <property type="match status" value="1"/>
</dbReference>
<dbReference type="Pfam" id="PF12637">
    <property type="entry name" value="TSCPD"/>
    <property type="match status" value="1"/>
</dbReference>
<dbReference type="PRINTS" id="PR01183">
    <property type="entry name" value="RIBORDTASEM1"/>
</dbReference>
<dbReference type="SUPFAM" id="SSF51998">
    <property type="entry name" value="PFL-like glycyl radical enzymes"/>
    <property type="match status" value="1"/>
</dbReference>
<keyword id="KW-0846">Cobalamin</keyword>
<keyword id="KW-0170">Cobalt</keyword>
<keyword id="KW-1015">Disulfide bond</keyword>
<keyword id="KW-0237">DNA synthesis</keyword>
<keyword id="KW-0547">Nucleotide-binding</keyword>
<keyword id="KW-0560">Oxidoreductase</keyword>
<keyword id="KW-1185">Reference proteome</keyword>
<evidence type="ECO:0000250" key="1"/>
<evidence type="ECO:0000256" key="2">
    <source>
        <dbReference type="SAM" id="MobiDB-lite"/>
    </source>
</evidence>
<evidence type="ECO:0000305" key="3"/>
<proteinExistence type="inferred from homology"/>
<reference key="1">
    <citation type="journal article" date="2003" name="Proc. Natl. Acad. Sci. U.S.A.">
        <title>Complete genome sequence of the marine planctomycete Pirellula sp. strain 1.</title>
        <authorList>
            <person name="Gloeckner F.O."/>
            <person name="Kube M."/>
            <person name="Bauer M."/>
            <person name="Teeling H."/>
            <person name="Lombardot T."/>
            <person name="Ludwig W."/>
            <person name="Gade D."/>
            <person name="Beck A."/>
            <person name="Borzym K."/>
            <person name="Heitmann K."/>
            <person name="Rabus R."/>
            <person name="Schlesner H."/>
            <person name="Amann R."/>
            <person name="Reinhardt R."/>
        </authorList>
    </citation>
    <scope>NUCLEOTIDE SEQUENCE [LARGE SCALE GENOMIC DNA]</scope>
    <source>
        <strain>DSM 10527 / NCIMB 13988 / SH1</strain>
    </source>
</reference>